<feature type="signal peptide" evidence="1">
    <location>
        <begin position="1"/>
        <end position="29"/>
    </location>
</feature>
<feature type="chain" id="PRO_0000229726" description="GlcNAc-binding protein A">
    <location>
        <begin position="30"/>
        <end position="485"/>
    </location>
</feature>
<feature type="domain" description="Chitin-binding type-4" evidence="1">
    <location>
        <begin position="30"/>
        <end position="200"/>
    </location>
</feature>
<feature type="domain" description="Chitin-binding type-3" evidence="1">
    <location>
        <begin position="437"/>
        <end position="478"/>
    </location>
</feature>
<gene>
    <name evidence="1" type="primary">gbpA</name>
    <name type="ordered locus">VV2_0044</name>
</gene>
<comment type="function">
    <text evidence="1">Probably interacts with GlcNAc residues. May promote attachment to both epithelial cell surfaces and chitin.</text>
</comment>
<comment type="subcellular location">
    <subcellularLocation>
        <location evidence="1">Secreted</location>
    </subcellularLocation>
</comment>
<comment type="similarity">
    <text evidence="1">Belongs to the GbpA family.</text>
</comment>
<organism>
    <name type="scientific">Vibrio vulnificus (strain CMCP6)</name>
    <dbReference type="NCBI Taxonomy" id="216895"/>
    <lineage>
        <taxon>Bacteria</taxon>
        <taxon>Pseudomonadati</taxon>
        <taxon>Pseudomonadota</taxon>
        <taxon>Gammaproteobacteria</taxon>
        <taxon>Vibrionales</taxon>
        <taxon>Vibrionaceae</taxon>
        <taxon>Vibrio</taxon>
    </lineage>
</organism>
<reference key="1">
    <citation type="submission" date="2002-12" db="EMBL/GenBank/DDBJ databases">
        <title>Complete genome sequence of Vibrio vulnificus CMCP6.</title>
        <authorList>
            <person name="Rhee J.H."/>
            <person name="Kim S.Y."/>
            <person name="Chung S.S."/>
            <person name="Kim J.J."/>
            <person name="Moon Y.H."/>
            <person name="Jeong H."/>
            <person name="Choy H.E."/>
        </authorList>
    </citation>
    <scope>NUCLEOTIDE SEQUENCE [LARGE SCALE GENOMIC DNA]</scope>
    <source>
        <strain>CMCP6</strain>
    </source>
</reference>
<name>GBPA_VIBVU</name>
<evidence type="ECO:0000255" key="1">
    <source>
        <dbReference type="HAMAP-Rule" id="MF_01905"/>
    </source>
</evidence>
<dbReference type="EMBL" id="AE016796">
    <property type="protein sequence ID" value="AAO07021.1"/>
    <property type="molecule type" value="Genomic_DNA"/>
</dbReference>
<dbReference type="RefSeq" id="WP_011081033.1">
    <property type="nucleotide sequence ID" value="NC_004460.2"/>
</dbReference>
<dbReference type="SMR" id="Q8D7V4"/>
<dbReference type="CAZy" id="AA10">
    <property type="family name" value="Auxiliary Activities 10"/>
</dbReference>
<dbReference type="CAZy" id="CBM73">
    <property type="family name" value="Carbohydrate-Binding Module Family 73"/>
</dbReference>
<dbReference type="KEGG" id="vvu:VV2_0044"/>
<dbReference type="HOGENOM" id="CLU_039396_2_0_6"/>
<dbReference type="Proteomes" id="UP000002275">
    <property type="component" value="Chromosome 2"/>
</dbReference>
<dbReference type="GO" id="GO:0005576">
    <property type="term" value="C:extracellular region"/>
    <property type="evidence" value="ECO:0007669"/>
    <property type="project" value="UniProtKB-SubCell"/>
</dbReference>
<dbReference type="GO" id="GO:0008061">
    <property type="term" value="F:chitin binding"/>
    <property type="evidence" value="ECO:0007669"/>
    <property type="project" value="UniProtKB-UniRule"/>
</dbReference>
<dbReference type="CDD" id="cd21177">
    <property type="entry name" value="LPMO_AA10"/>
    <property type="match status" value="1"/>
</dbReference>
<dbReference type="FunFam" id="2.70.50.50:FF:000001">
    <property type="entry name" value="Chitin-binding protein"/>
    <property type="match status" value="1"/>
</dbReference>
<dbReference type="Gene3D" id="2.60.40.2550">
    <property type="match status" value="1"/>
</dbReference>
<dbReference type="Gene3D" id="3.30.70.2150">
    <property type="match status" value="1"/>
</dbReference>
<dbReference type="Gene3D" id="2.70.50.50">
    <property type="entry name" value="chitin-binding protein cbp21"/>
    <property type="match status" value="1"/>
</dbReference>
<dbReference type="HAMAP" id="MF_01905">
    <property type="entry name" value="GbpA"/>
    <property type="match status" value="1"/>
</dbReference>
<dbReference type="InterPro" id="IPR004302">
    <property type="entry name" value="Cellulose/chitin-bd_N"/>
</dbReference>
<dbReference type="InterPro" id="IPR041029">
    <property type="entry name" value="GbpA_2"/>
</dbReference>
<dbReference type="InterPro" id="IPR054063">
    <property type="entry name" value="GbpA_D3"/>
</dbReference>
<dbReference type="InterPro" id="IPR020879">
    <property type="entry name" value="GlcNAc-bd_A"/>
</dbReference>
<dbReference type="InterPro" id="IPR051024">
    <property type="entry name" value="GlcNAc_Chitin_IntDeg"/>
</dbReference>
<dbReference type="InterPro" id="IPR014756">
    <property type="entry name" value="Ig_E-set"/>
</dbReference>
<dbReference type="NCBIfam" id="NF009690">
    <property type="entry name" value="PRK13211.1"/>
    <property type="match status" value="1"/>
</dbReference>
<dbReference type="PANTHER" id="PTHR34823:SF1">
    <property type="entry name" value="CHITIN-BINDING TYPE-4 DOMAIN-CONTAINING PROTEIN"/>
    <property type="match status" value="1"/>
</dbReference>
<dbReference type="PANTHER" id="PTHR34823">
    <property type="entry name" value="GLCNAC-BINDING PROTEIN A"/>
    <property type="match status" value="1"/>
</dbReference>
<dbReference type="Pfam" id="PF18416">
    <property type="entry name" value="GbpA_2"/>
    <property type="match status" value="1"/>
</dbReference>
<dbReference type="Pfam" id="PF21868">
    <property type="entry name" value="GbpA_D3"/>
    <property type="match status" value="1"/>
</dbReference>
<dbReference type="Pfam" id="PF03067">
    <property type="entry name" value="LPMO_10"/>
    <property type="match status" value="1"/>
</dbReference>
<dbReference type="SUPFAM" id="SSF81296">
    <property type="entry name" value="E set domains"/>
    <property type="match status" value="1"/>
</dbReference>
<accession>Q8D7V4</accession>
<proteinExistence type="inferred from homology"/>
<keyword id="KW-0147">Chitin-binding</keyword>
<keyword id="KW-0964">Secreted</keyword>
<keyword id="KW-0732">Signal</keyword>
<sequence length="485" mass="52817">MKKQPQKTLLAIALSVVSGTAMSHGYVSAVENGVAEARVTLCKFAASTGEKNTNCGAIQYEPQSVEGPDGFPASGPRDGKIASAESALANALDEQTADRWVKRPIQAGAQNFEWTFTANHVTKDWKYYITKPDWNPNQPLARASFDLTPFCVVDGGMVQPPKRVSHTCNVPEREGYQVILAVWDVGDTAASFYNVIDVKFDGDGPALPDWQQGGQIIPTMNLNVGDTVFTRVFDLAGENPAYTTELAIDSDALTVANNWSHALAVKINQTQSEIAAGQLNEQNQFVPVYGTNPIFLKSGSNLQRVEIGYKIETPAPEYDVTLSGLASEYQIGDAPVTLDLGLQATGDITTELTIYNHHKEPLAFETVAMTDGENKAVSMTLSKSEAGHHMLVTKVLDKDGTLQKQQTSDFMLTETQTPPPSDDYDFVFPDGLSSYTADTKVLASDGAIYQCKPFPYSGYCVQWTPTATQYQPGTGSHWQMAWDKL</sequence>
<protein>
    <recommendedName>
        <fullName evidence="1">GlcNAc-binding protein A</fullName>
    </recommendedName>
</protein>